<comment type="function">
    <text evidence="1">Binds together with bS18 to 16S ribosomal RNA.</text>
</comment>
<comment type="similarity">
    <text evidence="1">Belongs to the bacterial ribosomal protein bS6 family.</text>
</comment>
<protein>
    <recommendedName>
        <fullName evidence="1">Small ribosomal subunit protein bS6</fullName>
    </recommendedName>
    <alternativeName>
        <fullName evidence="2">30S ribosomal protein S6</fullName>
    </alternativeName>
</protein>
<evidence type="ECO:0000255" key="1">
    <source>
        <dbReference type="HAMAP-Rule" id="MF_00360"/>
    </source>
</evidence>
<evidence type="ECO:0000305" key="2"/>
<name>RS6_BACMK</name>
<keyword id="KW-0687">Ribonucleoprotein</keyword>
<keyword id="KW-0689">Ribosomal protein</keyword>
<keyword id="KW-0694">RNA-binding</keyword>
<keyword id="KW-0699">rRNA-binding</keyword>
<sequence>MRKYEIMYIIRPGVEEEAQKALVERFAGVLTNNGAEIINTKEWGKRRLAYEINDLREGFYMILNVNSNSEAINEFDRLAKINEDILRHIVVKEEEK</sequence>
<gene>
    <name evidence="1" type="primary">rpsF</name>
    <name type="ordered locus">BcerKBAB4_5267</name>
</gene>
<reference key="1">
    <citation type="journal article" date="2008" name="Chem. Biol. Interact.">
        <title>Extending the Bacillus cereus group genomics to putative food-borne pathogens of different toxicity.</title>
        <authorList>
            <person name="Lapidus A."/>
            <person name="Goltsman E."/>
            <person name="Auger S."/>
            <person name="Galleron N."/>
            <person name="Segurens B."/>
            <person name="Dossat C."/>
            <person name="Land M.L."/>
            <person name="Broussolle V."/>
            <person name="Brillard J."/>
            <person name="Guinebretiere M.-H."/>
            <person name="Sanchis V."/>
            <person name="Nguen-the C."/>
            <person name="Lereclus D."/>
            <person name="Richardson P."/>
            <person name="Wincker P."/>
            <person name="Weissenbach J."/>
            <person name="Ehrlich S.D."/>
            <person name="Sorokin A."/>
        </authorList>
    </citation>
    <scope>NUCLEOTIDE SEQUENCE [LARGE SCALE GENOMIC DNA]</scope>
    <source>
        <strain>KBAB4</strain>
    </source>
</reference>
<proteinExistence type="inferred from homology"/>
<feature type="chain" id="PRO_1000120708" description="Small ribosomal subunit protein bS6">
    <location>
        <begin position="1"/>
        <end position="96"/>
    </location>
</feature>
<organism>
    <name type="scientific">Bacillus mycoides (strain KBAB4)</name>
    <name type="common">Bacillus weihenstephanensis</name>
    <dbReference type="NCBI Taxonomy" id="315730"/>
    <lineage>
        <taxon>Bacteria</taxon>
        <taxon>Bacillati</taxon>
        <taxon>Bacillota</taxon>
        <taxon>Bacilli</taxon>
        <taxon>Bacillales</taxon>
        <taxon>Bacillaceae</taxon>
        <taxon>Bacillus</taxon>
        <taxon>Bacillus cereus group</taxon>
    </lineage>
</organism>
<dbReference type="EMBL" id="CP000903">
    <property type="protein sequence ID" value="ABY46410.1"/>
    <property type="molecule type" value="Genomic_DNA"/>
</dbReference>
<dbReference type="RefSeq" id="WP_001233782.1">
    <property type="nucleotide sequence ID" value="NC_010184.1"/>
</dbReference>
<dbReference type="SMR" id="A9VTL0"/>
<dbReference type="GeneID" id="92885943"/>
<dbReference type="KEGG" id="bwe:BcerKBAB4_5267"/>
<dbReference type="eggNOG" id="COG0360">
    <property type="taxonomic scope" value="Bacteria"/>
</dbReference>
<dbReference type="HOGENOM" id="CLU_113441_5_3_9"/>
<dbReference type="Proteomes" id="UP000002154">
    <property type="component" value="Chromosome"/>
</dbReference>
<dbReference type="GO" id="GO:0005737">
    <property type="term" value="C:cytoplasm"/>
    <property type="evidence" value="ECO:0007669"/>
    <property type="project" value="UniProtKB-ARBA"/>
</dbReference>
<dbReference type="GO" id="GO:1990904">
    <property type="term" value="C:ribonucleoprotein complex"/>
    <property type="evidence" value="ECO:0007669"/>
    <property type="project" value="UniProtKB-KW"/>
</dbReference>
<dbReference type="GO" id="GO:0005840">
    <property type="term" value="C:ribosome"/>
    <property type="evidence" value="ECO:0007669"/>
    <property type="project" value="UniProtKB-KW"/>
</dbReference>
<dbReference type="GO" id="GO:0070181">
    <property type="term" value="F:small ribosomal subunit rRNA binding"/>
    <property type="evidence" value="ECO:0007669"/>
    <property type="project" value="TreeGrafter"/>
</dbReference>
<dbReference type="GO" id="GO:0003735">
    <property type="term" value="F:structural constituent of ribosome"/>
    <property type="evidence" value="ECO:0007669"/>
    <property type="project" value="InterPro"/>
</dbReference>
<dbReference type="GO" id="GO:0006412">
    <property type="term" value="P:translation"/>
    <property type="evidence" value="ECO:0007669"/>
    <property type="project" value="UniProtKB-UniRule"/>
</dbReference>
<dbReference type="CDD" id="cd00473">
    <property type="entry name" value="bS6"/>
    <property type="match status" value="1"/>
</dbReference>
<dbReference type="FunFam" id="3.30.70.60:FF:000002">
    <property type="entry name" value="30S ribosomal protein S6"/>
    <property type="match status" value="1"/>
</dbReference>
<dbReference type="Gene3D" id="3.30.70.60">
    <property type="match status" value="1"/>
</dbReference>
<dbReference type="HAMAP" id="MF_00360">
    <property type="entry name" value="Ribosomal_bS6"/>
    <property type="match status" value="1"/>
</dbReference>
<dbReference type="InterPro" id="IPR000529">
    <property type="entry name" value="Ribosomal_bS6"/>
</dbReference>
<dbReference type="InterPro" id="IPR020815">
    <property type="entry name" value="Ribosomal_bS6_CS"/>
</dbReference>
<dbReference type="InterPro" id="IPR035980">
    <property type="entry name" value="Ribosomal_bS6_sf"/>
</dbReference>
<dbReference type="InterPro" id="IPR020814">
    <property type="entry name" value="Ribosomal_S6_plastid/chlpt"/>
</dbReference>
<dbReference type="InterPro" id="IPR014717">
    <property type="entry name" value="Transl_elong_EF1B/ribsomal_bS6"/>
</dbReference>
<dbReference type="NCBIfam" id="TIGR00166">
    <property type="entry name" value="S6"/>
    <property type="match status" value="1"/>
</dbReference>
<dbReference type="PANTHER" id="PTHR21011">
    <property type="entry name" value="MITOCHONDRIAL 28S RIBOSOMAL PROTEIN S6"/>
    <property type="match status" value="1"/>
</dbReference>
<dbReference type="PANTHER" id="PTHR21011:SF1">
    <property type="entry name" value="SMALL RIBOSOMAL SUBUNIT PROTEIN BS6M"/>
    <property type="match status" value="1"/>
</dbReference>
<dbReference type="Pfam" id="PF01250">
    <property type="entry name" value="Ribosomal_S6"/>
    <property type="match status" value="1"/>
</dbReference>
<dbReference type="SUPFAM" id="SSF54995">
    <property type="entry name" value="Ribosomal protein S6"/>
    <property type="match status" value="1"/>
</dbReference>
<dbReference type="PROSITE" id="PS01048">
    <property type="entry name" value="RIBOSOMAL_S6"/>
    <property type="match status" value="1"/>
</dbReference>
<accession>A9VTL0</accession>